<organism>
    <name type="scientific">Urechis unicinctus</name>
    <name type="common">Fat innkeeper worm</name>
    <name type="synonym">Chinese penis fish</name>
    <dbReference type="NCBI Taxonomy" id="6432"/>
    <lineage>
        <taxon>Eukaryota</taxon>
        <taxon>Metazoa</taxon>
        <taxon>Spiralia</taxon>
        <taxon>Lophotrochozoa</taxon>
        <taxon>Annelida</taxon>
        <taxon>Polychaeta</taxon>
        <taxon>Echiura</taxon>
        <taxon>Xenopneusta</taxon>
        <taxon>Urechidae</taxon>
        <taxon>Urechis</taxon>
    </lineage>
</organism>
<name>TKU1_UREUN</name>
<sequence length="10" mass="1177">LRQSQFVGSR</sequence>
<evidence type="ECO:0000269" key="1">
    <source>
    </source>
</evidence>
<dbReference type="GO" id="GO:0005576">
    <property type="term" value="C:extracellular region"/>
    <property type="evidence" value="ECO:0007669"/>
    <property type="project" value="UniProtKB-SubCell"/>
</dbReference>
<dbReference type="GO" id="GO:0007218">
    <property type="term" value="P:neuropeptide signaling pathway"/>
    <property type="evidence" value="ECO:0007669"/>
    <property type="project" value="UniProtKB-KW"/>
</dbReference>
<reference key="1">
    <citation type="journal article" date="1993" name="Biochem. Biophys. Res. Commun.">
        <title>Two novel tachykinin-related neuropeptides in the echiuroid worm, Urechis unicinctus.</title>
        <authorList>
            <person name="Ikeda T."/>
            <person name="Minakata H."/>
            <person name="Nomoto K."/>
            <person name="Kubota I."/>
            <person name="Muneoka Y."/>
        </authorList>
    </citation>
    <scope>PROTEIN SEQUENCE</scope>
    <scope>AMIDATION AT ARG-10</scope>
    <scope>SYNTHESIS</scope>
    <source>
        <tissue>Ventral nerve cord</tissue>
    </source>
</reference>
<feature type="peptide" id="PRO_0000044446" description="Urechistachykinin-1">
    <location>
        <begin position="1"/>
        <end position="10"/>
    </location>
</feature>
<feature type="modified residue" description="Arginine amide" evidence="1">
    <location>
        <position position="10"/>
    </location>
</feature>
<proteinExistence type="evidence at protein level"/>
<protein>
    <recommendedName>
        <fullName>Urechistachykinin-1</fullName>
    </recommendedName>
    <alternativeName>
        <fullName>Urechistachykinin I</fullName>
    </alternativeName>
</protein>
<keyword id="KW-0027">Amidation</keyword>
<keyword id="KW-0903">Direct protein sequencing</keyword>
<keyword id="KW-0527">Neuropeptide</keyword>
<keyword id="KW-0964">Secreted</keyword>
<accession>P40751</accession>
<comment type="function">
    <text>Contractile action on the inner circular body-wall muscle of the animal.</text>
</comment>
<comment type="subcellular location">
    <subcellularLocation>
        <location>Secreted</location>
    </subcellularLocation>
</comment>